<keyword id="KW-0274">FAD</keyword>
<keyword id="KW-0285">Flavoprotein</keyword>
<keyword id="KW-0521">NADP</keyword>
<keyword id="KW-0560">Oxidoreductase</keyword>
<accession>A0LY71</accession>
<proteinExistence type="inferred from homology"/>
<comment type="catalytic activity">
    <reaction evidence="1">
        <text>2 reduced [2Fe-2S]-[ferredoxin] + NADP(+) + H(+) = 2 oxidized [2Fe-2S]-[ferredoxin] + NADPH</text>
        <dbReference type="Rhea" id="RHEA:20125"/>
        <dbReference type="Rhea" id="RHEA-COMP:10000"/>
        <dbReference type="Rhea" id="RHEA-COMP:10001"/>
        <dbReference type="ChEBI" id="CHEBI:15378"/>
        <dbReference type="ChEBI" id="CHEBI:33737"/>
        <dbReference type="ChEBI" id="CHEBI:33738"/>
        <dbReference type="ChEBI" id="CHEBI:57783"/>
        <dbReference type="ChEBI" id="CHEBI:58349"/>
        <dbReference type="EC" id="1.18.1.2"/>
    </reaction>
</comment>
<comment type="cofactor">
    <cofactor evidence="1">
        <name>FAD</name>
        <dbReference type="ChEBI" id="CHEBI:57692"/>
    </cofactor>
    <text evidence="1">Binds 1 FAD per subunit.</text>
</comment>
<comment type="subunit">
    <text evidence="1">Homodimer.</text>
</comment>
<comment type="similarity">
    <text evidence="1">Belongs to the ferredoxin--NADP reductase type 2 family.</text>
</comment>
<protein>
    <recommendedName>
        <fullName evidence="1">Ferredoxin--NADP reductase 2</fullName>
        <shortName evidence="1">FNR 2</shortName>
        <shortName evidence="1">Fd-NADP(+) reductase 2</shortName>
        <ecNumber evidence="1">1.18.1.2</ecNumber>
    </recommendedName>
</protein>
<evidence type="ECO:0000255" key="1">
    <source>
        <dbReference type="HAMAP-Rule" id="MF_01685"/>
    </source>
</evidence>
<reference key="1">
    <citation type="journal article" date="2006" name="Environ. Microbiol.">
        <title>Whole genome analysis of the marine Bacteroidetes'Gramella forsetii' reveals adaptations to degradation of polymeric organic matter.</title>
        <authorList>
            <person name="Bauer M."/>
            <person name="Kube M."/>
            <person name="Teeling H."/>
            <person name="Richter M."/>
            <person name="Lombardot T."/>
            <person name="Allers E."/>
            <person name="Wuerdemann C.A."/>
            <person name="Quast C."/>
            <person name="Kuhl H."/>
            <person name="Knaust F."/>
            <person name="Woebken D."/>
            <person name="Bischof K."/>
            <person name="Mussmann M."/>
            <person name="Choudhuri J.V."/>
            <person name="Meyer F."/>
            <person name="Reinhardt R."/>
            <person name="Amann R.I."/>
            <person name="Gloeckner F.O."/>
        </authorList>
    </citation>
    <scope>NUCLEOTIDE SEQUENCE [LARGE SCALE GENOMIC DNA]</scope>
    <source>
        <strain>DSM 17595 / CGMCC 1.15422 / KT0803</strain>
    </source>
</reference>
<organism>
    <name type="scientific">Christiangramia forsetii (strain DSM 17595 / CGMCC 1.15422 / KT0803)</name>
    <name type="common">Gramella forsetii</name>
    <dbReference type="NCBI Taxonomy" id="411154"/>
    <lineage>
        <taxon>Bacteria</taxon>
        <taxon>Pseudomonadati</taxon>
        <taxon>Bacteroidota</taxon>
        <taxon>Flavobacteriia</taxon>
        <taxon>Flavobacteriales</taxon>
        <taxon>Flavobacteriaceae</taxon>
        <taxon>Christiangramia</taxon>
    </lineage>
</organism>
<name>FENR2_CHRFK</name>
<feature type="chain" id="PRO_0000364845" description="Ferredoxin--NADP reductase 2">
    <location>
        <begin position="1"/>
        <end position="354"/>
    </location>
</feature>
<feature type="binding site" evidence="1">
    <location>
        <position position="14"/>
    </location>
    <ligand>
        <name>FAD</name>
        <dbReference type="ChEBI" id="CHEBI:57692"/>
    </ligand>
</feature>
<feature type="binding site" evidence="1">
    <location>
        <position position="33"/>
    </location>
    <ligand>
        <name>FAD</name>
        <dbReference type="ChEBI" id="CHEBI:57692"/>
    </ligand>
</feature>
<feature type="binding site" evidence="1">
    <location>
        <position position="41"/>
    </location>
    <ligand>
        <name>FAD</name>
        <dbReference type="ChEBI" id="CHEBI:57692"/>
    </ligand>
</feature>
<feature type="binding site" evidence="1">
    <location>
        <position position="46"/>
    </location>
    <ligand>
        <name>FAD</name>
        <dbReference type="ChEBI" id="CHEBI:57692"/>
    </ligand>
</feature>
<feature type="binding site" evidence="1">
    <location>
        <position position="86"/>
    </location>
    <ligand>
        <name>FAD</name>
        <dbReference type="ChEBI" id="CHEBI:57692"/>
    </ligand>
</feature>
<feature type="binding site" evidence="1">
    <location>
        <position position="121"/>
    </location>
    <ligand>
        <name>FAD</name>
        <dbReference type="ChEBI" id="CHEBI:57692"/>
    </ligand>
</feature>
<feature type="binding site" evidence="1">
    <location>
        <position position="289"/>
    </location>
    <ligand>
        <name>FAD</name>
        <dbReference type="ChEBI" id="CHEBI:57692"/>
    </ligand>
</feature>
<feature type="binding site" evidence="1">
    <location>
        <position position="330"/>
    </location>
    <ligand>
        <name>FAD</name>
        <dbReference type="ChEBI" id="CHEBI:57692"/>
    </ligand>
</feature>
<dbReference type="EC" id="1.18.1.2" evidence="1"/>
<dbReference type="EMBL" id="CU207366">
    <property type="protein sequence ID" value="CAL65316.1"/>
    <property type="molecule type" value="Genomic_DNA"/>
</dbReference>
<dbReference type="RefSeq" id="WP_011708254.1">
    <property type="nucleotide sequence ID" value="NC_008571.1"/>
</dbReference>
<dbReference type="SMR" id="A0LY71"/>
<dbReference type="STRING" id="411154.GFO_0330"/>
<dbReference type="KEGG" id="gfo:GFO_0330"/>
<dbReference type="eggNOG" id="COG0492">
    <property type="taxonomic scope" value="Bacteria"/>
</dbReference>
<dbReference type="HOGENOM" id="CLU_031864_5_5_10"/>
<dbReference type="OrthoDB" id="9806179at2"/>
<dbReference type="Proteomes" id="UP000000755">
    <property type="component" value="Chromosome"/>
</dbReference>
<dbReference type="GO" id="GO:0004324">
    <property type="term" value="F:ferredoxin-NADP+ reductase activity"/>
    <property type="evidence" value="ECO:0007669"/>
    <property type="project" value="UniProtKB-UniRule"/>
</dbReference>
<dbReference type="GO" id="GO:0050660">
    <property type="term" value="F:flavin adenine dinucleotide binding"/>
    <property type="evidence" value="ECO:0007669"/>
    <property type="project" value="UniProtKB-UniRule"/>
</dbReference>
<dbReference type="GO" id="GO:0050661">
    <property type="term" value="F:NADP binding"/>
    <property type="evidence" value="ECO:0007669"/>
    <property type="project" value="UniProtKB-UniRule"/>
</dbReference>
<dbReference type="Gene3D" id="3.50.50.60">
    <property type="entry name" value="FAD/NAD(P)-binding domain"/>
    <property type="match status" value="2"/>
</dbReference>
<dbReference type="HAMAP" id="MF_01685">
    <property type="entry name" value="FENR2"/>
    <property type="match status" value="1"/>
</dbReference>
<dbReference type="InterPro" id="IPR036188">
    <property type="entry name" value="FAD/NAD-bd_sf"/>
</dbReference>
<dbReference type="InterPro" id="IPR023753">
    <property type="entry name" value="FAD/NAD-binding_dom"/>
</dbReference>
<dbReference type="InterPro" id="IPR022890">
    <property type="entry name" value="Fd--NADP_Rdtase_type_2"/>
</dbReference>
<dbReference type="InterPro" id="IPR050097">
    <property type="entry name" value="Ferredoxin-NADP_redctase_2"/>
</dbReference>
<dbReference type="PANTHER" id="PTHR48105">
    <property type="entry name" value="THIOREDOXIN REDUCTASE 1-RELATED-RELATED"/>
    <property type="match status" value="1"/>
</dbReference>
<dbReference type="Pfam" id="PF07992">
    <property type="entry name" value="Pyr_redox_2"/>
    <property type="match status" value="1"/>
</dbReference>
<dbReference type="PRINTS" id="PR00368">
    <property type="entry name" value="FADPNR"/>
</dbReference>
<dbReference type="PRINTS" id="PR00469">
    <property type="entry name" value="PNDRDTASEII"/>
</dbReference>
<dbReference type="SUPFAM" id="SSF51905">
    <property type="entry name" value="FAD/NAD(P)-binding domain"/>
    <property type="match status" value="1"/>
</dbReference>
<sequence length="354" mass="38808">MIKTDILIIGAGPTGLFTVFEAGLLKLKTHLIDALPQPGGQCSEIYPKKPIYDIPAFPEILAGDLVSNLMEQIRPFKPGFTLGERAETLEKLDDGSFIVTTNKGTQHHAPVVAIAGGLGSFEPRKPPIPNIADFEDKGVSYFIKDPEVYRDKKVVIAGGGDSALDWAIYLADVASEVALVHRRAEFRGALDSVERVSELAKLGRIEMITNAEVVGLRGEDNLEQVVIRHKDKARGEEFRDVDDFIPLFGLSPKLGPIGSWGLEIERNAIKVDNSYDYQTNIPGVYAIGDVNTYKGKLKLILSGFHEAAIMCQSAYQRIYPDKKYVLKYTTVGGVEGFDGTKKEAKKEVVQSIGV</sequence>
<gene>
    <name type="ordered locus">GFO_0330</name>
</gene>